<keyword id="KW-0066">ATP synthesis</keyword>
<keyword id="KW-0139">CF(1)</keyword>
<keyword id="KW-0150">Chloroplast</keyword>
<keyword id="KW-0375">Hydrogen ion transport</keyword>
<keyword id="KW-0406">Ion transport</keyword>
<keyword id="KW-0472">Membrane</keyword>
<keyword id="KW-0934">Plastid</keyword>
<keyword id="KW-0793">Thylakoid</keyword>
<keyword id="KW-0813">Transport</keyword>
<proteinExistence type="inferred from homology"/>
<geneLocation type="chloroplast"/>
<sequence length="133" mass="14703">MALTVKVITPDRVVWKKTVEEIILPSSTGQLGILMNHAPLLTALDIGVMRARMVNTWVPLVLLGGFAQIDNNLVTIIVSDAEEVKAIDEEEANKLLAASLANMEKAQSNREKIESMQNLRRARARMQAILSLK</sequence>
<protein>
    <recommendedName>
        <fullName evidence="1">ATP synthase epsilon chain, chloroplastic</fullName>
    </recommendedName>
    <alternativeName>
        <fullName evidence="1">ATP synthase F1 sector epsilon subunit</fullName>
    </alternativeName>
    <alternativeName>
        <fullName evidence="1">F-ATPase epsilon subunit</fullName>
    </alternativeName>
</protein>
<feature type="chain" id="PRO_0000188261" description="ATP synthase epsilon chain, chloroplastic">
    <location>
        <begin position="1"/>
        <end position="133"/>
    </location>
</feature>
<evidence type="ECO:0000255" key="1">
    <source>
        <dbReference type="HAMAP-Rule" id="MF_00530"/>
    </source>
</evidence>
<name>ATPE_CYACA</name>
<accession>Q9TM40</accession>
<dbReference type="EMBL" id="AF022186">
    <property type="protein sequence ID" value="AAF13019.1"/>
    <property type="molecule type" value="Genomic_DNA"/>
</dbReference>
<dbReference type="RefSeq" id="NP_045026.1">
    <property type="nucleotide sequence ID" value="NC_001840.1"/>
</dbReference>
<dbReference type="SMR" id="Q9TM40"/>
<dbReference type="GeneID" id="800236"/>
<dbReference type="GO" id="GO:0009535">
    <property type="term" value="C:chloroplast thylakoid membrane"/>
    <property type="evidence" value="ECO:0007669"/>
    <property type="project" value="UniProtKB-SubCell"/>
</dbReference>
<dbReference type="GO" id="GO:0045259">
    <property type="term" value="C:proton-transporting ATP synthase complex"/>
    <property type="evidence" value="ECO:0007669"/>
    <property type="project" value="UniProtKB-KW"/>
</dbReference>
<dbReference type="GO" id="GO:0005524">
    <property type="term" value="F:ATP binding"/>
    <property type="evidence" value="ECO:0007669"/>
    <property type="project" value="UniProtKB-UniRule"/>
</dbReference>
<dbReference type="GO" id="GO:0046933">
    <property type="term" value="F:proton-transporting ATP synthase activity, rotational mechanism"/>
    <property type="evidence" value="ECO:0007669"/>
    <property type="project" value="UniProtKB-UniRule"/>
</dbReference>
<dbReference type="CDD" id="cd12152">
    <property type="entry name" value="F1-ATPase_delta"/>
    <property type="match status" value="1"/>
</dbReference>
<dbReference type="Gene3D" id="2.60.15.10">
    <property type="entry name" value="F0F1 ATP synthase delta/epsilon subunit, N-terminal"/>
    <property type="match status" value="1"/>
</dbReference>
<dbReference type="Gene3D" id="1.10.287.540">
    <property type="entry name" value="Helix hairpin bin"/>
    <property type="match status" value="1"/>
</dbReference>
<dbReference type="HAMAP" id="MF_00530">
    <property type="entry name" value="ATP_synth_epsil_bac"/>
    <property type="match status" value="1"/>
</dbReference>
<dbReference type="InterPro" id="IPR001469">
    <property type="entry name" value="ATP_synth_F1_dsu/esu"/>
</dbReference>
<dbReference type="InterPro" id="IPR020546">
    <property type="entry name" value="ATP_synth_F1_dsu/esu_N"/>
</dbReference>
<dbReference type="InterPro" id="IPR036771">
    <property type="entry name" value="ATPsynth_dsu/esu_N"/>
</dbReference>
<dbReference type="NCBIfam" id="TIGR01216">
    <property type="entry name" value="ATP_synt_epsi"/>
    <property type="match status" value="1"/>
</dbReference>
<dbReference type="PANTHER" id="PTHR13822">
    <property type="entry name" value="ATP SYNTHASE DELTA/EPSILON CHAIN"/>
    <property type="match status" value="1"/>
</dbReference>
<dbReference type="PANTHER" id="PTHR13822:SF10">
    <property type="entry name" value="ATP SYNTHASE EPSILON CHAIN, CHLOROPLASTIC"/>
    <property type="match status" value="1"/>
</dbReference>
<dbReference type="Pfam" id="PF02823">
    <property type="entry name" value="ATP-synt_DE_N"/>
    <property type="match status" value="1"/>
</dbReference>
<dbReference type="SUPFAM" id="SSF51344">
    <property type="entry name" value="Epsilon subunit of F1F0-ATP synthase N-terminal domain"/>
    <property type="match status" value="1"/>
</dbReference>
<comment type="function">
    <text evidence="1">Produces ATP from ADP in the presence of a proton gradient across the membrane.</text>
</comment>
<comment type="subunit">
    <text evidence="1">F-type ATPases have 2 components, CF(1) - the catalytic core - and CF(0) - the membrane proton channel. CF(1) has five subunits: alpha(3), beta(3), gamma(1), delta(1), epsilon(1). CF(0) has three main subunits: a, b and c.</text>
</comment>
<comment type="subcellular location">
    <subcellularLocation>
        <location evidence="1">Plastid</location>
        <location evidence="1">Chloroplast thylakoid membrane</location>
        <topology evidence="1">Peripheral membrane protein</topology>
    </subcellularLocation>
</comment>
<comment type="similarity">
    <text evidence="1">Belongs to the ATPase epsilon chain family.</text>
</comment>
<organism>
    <name type="scientific">Cyanidium caldarium</name>
    <name type="common">Red alga</name>
    <dbReference type="NCBI Taxonomy" id="2771"/>
    <lineage>
        <taxon>Eukaryota</taxon>
        <taxon>Rhodophyta</taxon>
        <taxon>Bangiophyceae</taxon>
        <taxon>Cyanidiales</taxon>
        <taxon>Cyanidiaceae</taxon>
        <taxon>Cyanidium</taxon>
    </lineage>
</organism>
<reference key="1">
    <citation type="journal article" date="2000" name="J. Mol. Evol.">
        <title>The structure and gene repertoire of an ancient red algal plastid genome.</title>
        <authorList>
            <person name="Gloeckner G."/>
            <person name="Rosenthal A."/>
            <person name="Valentin K.-U."/>
        </authorList>
    </citation>
    <scope>NUCLEOTIDE SEQUENCE [LARGE SCALE GENOMIC DNA]</scope>
    <source>
        <strain>RK-1</strain>
    </source>
</reference>
<gene>
    <name evidence="1" type="primary">atpE</name>
</gene>